<reference key="1">
    <citation type="journal article" date="2009" name="J. Bacteriol.">
        <title>Genome sequence of the probiotic bacterium Bifidobacterium animalis subsp. lactis AD011.</title>
        <authorList>
            <person name="Kim J.F."/>
            <person name="Jeong H."/>
            <person name="Yu D.S."/>
            <person name="Choi S.-H."/>
            <person name="Hur C.-G."/>
            <person name="Park M.-S."/>
            <person name="Yoon S.H."/>
            <person name="Kim D.-W."/>
            <person name="Ji G.E."/>
            <person name="Park H.-S."/>
            <person name="Oh T.K."/>
        </authorList>
    </citation>
    <scope>NUCLEOTIDE SEQUENCE [LARGE SCALE GENOMIC DNA]</scope>
    <source>
        <strain>AD011</strain>
    </source>
</reference>
<gene>
    <name evidence="1" type="primary">rpsP</name>
    <name type="ordered locus">BLA_0255</name>
</gene>
<name>RS16_BIFA0</name>
<protein>
    <recommendedName>
        <fullName evidence="1">Small ribosomal subunit protein bS16</fullName>
    </recommendedName>
    <alternativeName>
        <fullName evidence="3">30S ribosomal protein S16</fullName>
    </alternativeName>
</protein>
<dbReference type="EMBL" id="CP001213">
    <property type="protein sequence ID" value="ACL28557.1"/>
    <property type="molecule type" value="Genomic_DNA"/>
</dbReference>
<dbReference type="RefSeq" id="WP_004268360.1">
    <property type="nucleotide sequence ID" value="NC_011835.1"/>
</dbReference>
<dbReference type="SMR" id="B8DVQ6"/>
<dbReference type="STRING" id="442563.BLA_0255"/>
<dbReference type="GeneID" id="29696122"/>
<dbReference type="KEGG" id="bla:BLA_0255"/>
<dbReference type="HOGENOM" id="CLU_100590_1_0_11"/>
<dbReference type="Proteomes" id="UP000002456">
    <property type="component" value="Chromosome"/>
</dbReference>
<dbReference type="GO" id="GO:0005737">
    <property type="term" value="C:cytoplasm"/>
    <property type="evidence" value="ECO:0007669"/>
    <property type="project" value="UniProtKB-ARBA"/>
</dbReference>
<dbReference type="GO" id="GO:0015935">
    <property type="term" value="C:small ribosomal subunit"/>
    <property type="evidence" value="ECO:0007669"/>
    <property type="project" value="TreeGrafter"/>
</dbReference>
<dbReference type="GO" id="GO:0003735">
    <property type="term" value="F:structural constituent of ribosome"/>
    <property type="evidence" value="ECO:0007669"/>
    <property type="project" value="InterPro"/>
</dbReference>
<dbReference type="GO" id="GO:0006412">
    <property type="term" value="P:translation"/>
    <property type="evidence" value="ECO:0007669"/>
    <property type="project" value="UniProtKB-UniRule"/>
</dbReference>
<dbReference type="Gene3D" id="3.30.1320.10">
    <property type="match status" value="1"/>
</dbReference>
<dbReference type="HAMAP" id="MF_00385">
    <property type="entry name" value="Ribosomal_bS16"/>
    <property type="match status" value="1"/>
</dbReference>
<dbReference type="InterPro" id="IPR000307">
    <property type="entry name" value="Ribosomal_bS16"/>
</dbReference>
<dbReference type="InterPro" id="IPR020592">
    <property type="entry name" value="Ribosomal_bS16_CS"/>
</dbReference>
<dbReference type="InterPro" id="IPR023803">
    <property type="entry name" value="Ribosomal_bS16_dom_sf"/>
</dbReference>
<dbReference type="NCBIfam" id="NF011093">
    <property type="entry name" value="PRK14520.1"/>
    <property type="match status" value="1"/>
</dbReference>
<dbReference type="NCBIfam" id="TIGR00002">
    <property type="entry name" value="S16"/>
    <property type="match status" value="1"/>
</dbReference>
<dbReference type="PANTHER" id="PTHR12919">
    <property type="entry name" value="30S RIBOSOMAL PROTEIN S16"/>
    <property type="match status" value="1"/>
</dbReference>
<dbReference type="PANTHER" id="PTHR12919:SF20">
    <property type="entry name" value="SMALL RIBOSOMAL SUBUNIT PROTEIN BS16M"/>
    <property type="match status" value="1"/>
</dbReference>
<dbReference type="Pfam" id="PF00886">
    <property type="entry name" value="Ribosomal_S16"/>
    <property type="match status" value="1"/>
</dbReference>
<dbReference type="SUPFAM" id="SSF54565">
    <property type="entry name" value="Ribosomal protein S16"/>
    <property type="match status" value="1"/>
</dbReference>
<dbReference type="PROSITE" id="PS00732">
    <property type="entry name" value="RIBOSOMAL_S16"/>
    <property type="match status" value="1"/>
</dbReference>
<sequence length="156" mass="17069">MATKIRLKRMGKKFYAVYRVVVMDSRTKRDGRAIEEIGLYNPNTQPSTIEIKSDRAQYWLGVGAQPTDQVLNLLKITGDWQKFKGLKGAEGTLKTAAAKPEAAVLVEEAENKAQKLKAAKAEAAAKAAEAETPAEVQHDDEKVELADVEESAPESV</sequence>
<proteinExistence type="inferred from homology"/>
<evidence type="ECO:0000255" key="1">
    <source>
        <dbReference type="HAMAP-Rule" id="MF_00385"/>
    </source>
</evidence>
<evidence type="ECO:0000256" key="2">
    <source>
        <dbReference type="SAM" id="MobiDB-lite"/>
    </source>
</evidence>
<evidence type="ECO:0000305" key="3"/>
<feature type="chain" id="PRO_1000196338" description="Small ribosomal subunit protein bS16">
    <location>
        <begin position="1"/>
        <end position="156"/>
    </location>
</feature>
<feature type="region of interest" description="Disordered" evidence="2">
    <location>
        <begin position="124"/>
        <end position="156"/>
    </location>
</feature>
<feature type="compositionally biased region" description="Low complexity" evidence="2">
    <location>
        <begin position="124"/>
        <end position="135"/>
    </location>
</feature>
<feature type="compositionally biased region" description="Basic and acidic residues" evidence="2">
    <location>
        <begin position="136"/>
        <end position="145"/>
    </location>
</feature>
<feature type="compositionally biased region" description="Acidic residues" evidence="2">
    <location>
        <begin position="146"/>
        <end position="156"/>
    </location>
</feature>
<organism>
    <name type="scientific">Bifidobacterium animalis subsp. lactis (strain AD011)</name>
    <dbReference type="NCBI Taxonomy" id="442563"/>
    <lineage>
        <taxon>Bacteria</taxon>
        <taxon>Bacillati</taxon>
        <taxon>Actinomycetota</taxon>
        <taxon>Actinomycetes</taxon>
        <taxon>Bifidobacteriales</taxon>
        <taxon>Bifidobacteriaceae</taxon>
        <taxon>Bifidobacterium</taxon>
    </lineage>
</organism>
<accession>B8DVQ6</accession>
<keyword id="KW-1185">Reference proteome</keyword>
<keyword id="KW-0687">Ribonucleoprotein</keyword>
<keyword id="KW-0689">Ribosomal protein</keyword>
<comment type="similarity">
    <text evidence="1">Belongs to the bacterial ribosomal protein bS16 family.</text>
</comment>